<reference key="1">
    <citation type="journal article" date="2005" name="Science">
        <title>The transcriptional landscape of the mammalian genome.</title>
        <authorList>
            <person name="Carninci P."/>
            <person name="Kasukawa T."/>
            <person name="Katayama S."/>
            <person name="Gough J."/>
            <person name="Frith M.C."/>
            <person name="Maeda N."/>
            <person name="Oyama R."/>
            <person name="Ravasi T."/>
            <person name="Lenhard B."/>
            <person name="Wells C."/>
            <person name="Kodzius R."/>
            <person name="Shimokawa K."/>
            <person name="Bajic V.B."/>
            <person name="Brenner S.E."/>
            <person name="Batalov S."/>
            <person name="Forrest A.R."/>
            <person name="Zavolan M."/>
            <person name="Davis M.J."/>
            <person name="Wilming L.G."/>
            <person name="Aidinis V."/>
            <person name="Allen J.E."/>
            <person name="Ambesi-Impiombato A."/>
            <person name="Apweiler R."/>
            <person name="Aturaliya R.N."/>
            <person name="Bailey T.L."/>
            <person name="Bansal M."/>
            <person name="Baxter L."/>
            <person name="Beisel K.W."/>
            <person name="Bersano T."/>
            <person name="Bono H."/>
            <person name="Chalk A.M."/>
            <person name="Chiu K.P."/>
            <person name="Choudhary V."/>
            <person name="Christoffels A."/>
            <person name="Clutterbuck D.R."/>
            <person name="Crowe M.L."/>
            <person name="Dalla E."/>
            <person name="Dalrymple B.P."/>
            <person name="de Bono B."/>
            <person name="Della Gatta G."/>
            <person name="di Bernardo D."/>
            <person name="Down T."/>
            <person name="Engstrom P."/>
            <person name="Fagiolini M."/>
            <person name="Faulkner G."/>
            <person name="Fletcher C.F."/>
            <person name="Fukushima T."/>
            <person name="Furuno M."/>
            <person name="Futaki S."/>
            <person name="Gariboldi M."/>
            <person name="Georgii-Hemming P."/>
            <person name="Gingeras T.R."/>
            <person name="Gojobori T."/>
            <person name="Green R.E."/>
            <person name="Gustincich S."/>
            <person name="Harbers M."/>
            <person name="Hayashi Y."/>
            <person name="Hensch T.K."/>
            <person name="Hirokawa N."/>
            <person name="Hill D."/>
            <person name="Huminiecki L."/>
            <person name="Iacono M."/>
            <person name="Ikeo K."/>
            <person name="Iwama A."/>
            <person name="Ishikawa T."/>
            <person name="Jakt M."/>
            <person name="Kanapin A."/>
            <person name="Katoh M."/>
            <person name="Kawasawa Y."/>
            <person name="Kelso J."/>
            <person name="Kitamura H."/>
            <person name="Kitano H."/>
            <person name="Kollias G."/>
            <person name="Krishnan S.P."/>
            <person name="Kruger A."/>
            <person name="Kummerfeld S.K."/>
            <person name="Kurochkin I.V."/>
            <person name="Lareau L.F."/>
            <person name="Lazarevic D."/>
            <person name="Lipovich L."/>
            <person name="Liu J."/>
            <person name="Liuni S."/>
            <person name="McWilliam S."/>
            <person name="Madan Babu M."/>
            <person name="Madera M."/>
            <person name="Marchionni L."/>
            <person name="Matsuda H."/>
            <person name="Matsuzawa S."/>
            <person name="Miki H."/>
            <person name="Mignone F."/>
            <person name="Miyake S."/>
            <person name="Morris K."/>
            <person name="Mottagui-Tabar S."/>
            <person name="Mulder N."/>
            <person name="Nakano N."/>
            <person name="Nakauchi H."/>
            <person name="Ng P."/>
            <person name="Nilsson R."/>
            <person name="Nishiguchi S."/>
            <person name="Nishikawa S."/>
            <person name="Nori F."/>
            <person name="Ohara O."/>
            <person name="Okazaki Y."/>
            <person name="Orlando V."/>
            <person name="Pang K.C."/>
            <person name="Pavan W.J."/>
            <person name="Pavesi G."/>
            <person name="Pesole G."/>
            <person name="Petrovsky N."/>
            <person name="Piazza S."/>
            <person name="Reed J."/>
            <person name="Reid J.F."/>
            <person name="Ring B.Z."/>
            <person name="Ringwald M."/>
            <person name="Rost B."/>
            <person name="Ruan Y."/>
            <person name="Salzberg S.L."/>
            <person name="Sandelin A."/>
            <person name="Schneider C."/>
            <person name="Schoenbach C."/>
            <person name="Sekiguchi K."/>
            <person name="Semple C.A."/>
            <person name="Seno S."/>
            <person name="Sessa L."/>
            <person name="Sheng Y."/>
            <person name="Shibata Y."/>
            <person name="Shimada H."/>
            <person name="Shimada K."/>
            <person name="Silva D."/>
            <person name="Sinclair B."/>
            <person name="Sperling S."/>
            <person name="Stupka E."/>
            <person name="Sugiura K."/>
            <person name="Sultana R."/>
            <person name="Takenaka Y."/>
            <person name="Taki K."/>
            <person name="Tammoja K."/>
            <person name="Tan S.L."/>
            <person name="Tang S."/>
            <person name="Taylor M.S."/>
            <person name="Tegner J."/>
            <person name="Teichmann S.A."/>
            <person name="Ueda H.R."/>
            <person name="van Nimwegen E."/>
            <person name="Verardo R."/>
            <person name="Wei C.L."/>
            <person name="Yagi K."/>
            <person name="Yamanishi H."/>
            <person name="Zabarovsky E."/>
            <person name="Zhu S."/>
            <person name="Zimmer A."/>
            <person name="Hide W."/>
            <person name="Bult C."/>
            <person name="Grimmond S.M."/>
            <person name="Teasdale R.D."/>
            <person name="Liu E.T."/>
            <person name="Brusic V."/>
            <person name="Quackenbush J."/>
            <person name="Wahlestedt C."/>
            <person name="Mattick J.S."/>
            <person name="Hume D.A."/>
            <person name="Kai C."/>
            <person name="Sasaki D."/>
            <person name="Tomaru Y."/>
            <person name="Fukuda S."/>
            <person name="Kanamori-Katayama M."/>
            <person name="Suzuki M."/>
            <person name="Aoki J."/>
            <person name="Arakawa T."/>
            <person name="Iida J."/>
            <person name="Imamura K."/>
            <person name="Itoh M."/>
            <person name="Kato T."/>
            <person name="Kawaji H."/>
            <person name="Kawagashira N."/>
            <person name="Kawashima T."/>
            <person name="Kojima M."/>
            <person name="Kondo S."/>
            <person name="Konno H."/>
            <person name="Nakano K."/>
            <person name="Ninomiya N."/>
            <person name="Nishio T."/>
            <person name="Okada M."/>
            <person name="Plessy C."/>
            <person name="Shibata K."/>
            <person name="Shiraki T."/>
            <person name="Suzuki S."/>
            <person name="Tagami M."/>
            <person name="Waki K."/>
            <person name="Watahiki A."/>
            <person name="Okamura-Oho Y."/>
            <person name="Suzuki H."/>
            <person name="Kawai J."/>
            <person name="Hayashizaki Y."/>
        </authorList>
    </citation>
    <scope>NUCLEOTIDE SEQUENCE [LARGE SCALE MRNA] (ISOFORM 3)</scope>
    <scope>NUCLEOTIDE SEQUENCE [LARGE SCALE MRNA] OF 1-252 (ISOFORMS 1/2/3)</scope>
    <scope>NUCLEOTIDE SEQUENCE [LARGE SCALE MRNA] OF 165-432 (ISOFORM 1)</scope>
    <source>
        <strain>C57BL/6J</strain>
        <tissue>Embryonic head</tissue>
        <tissue>Embryonic heart</tissue>
        <tissue>Macrophage</tissue>
        <tissue>Placenta</tissue>
    </source>
</reference>
<reference key="2">
    <citation type="journal article" date="2009" name="PLoS Biol.">
        <title>Lineage-specific biology revealed by a finished genome assembly of the mouse.</title>
        <authorList>
            <person name="Church D.M."/>
            <person name="Goodstadt L."/>
            <person name="Hillier L.W."/>
            <person name="Zody M.C."/>
            <person name="Goldstein S."/>
            <person name="She X."/>
            <person name="Bult C.J."/>
            <person name="Agarwala R."/>
            <person name="Cherry J.L."/>
            <person name="DiCuccio M."/>
            <person name="Hlavina W."/>
            <person name="Kapustin Y."/>
            <person name="Meric P."/>
            <person name="Maglott D."/>
            <person name="Birtle Z."/>
            <person name="Marques A.C."/>
            <person name="Graves T."/>
            <person name="Zhou S."/>
            <person name="Teague B."/>
            <person name="Potamousis K."/>
            <person name="Churas C."/>
            <person name="Place M."/>
            <person name="Herschleb J."/>
            <person name="Runnheim R."/>
            <person name="Forrest D."/>
            <person name="Amos-Landgraf J."/>
            <person name="Schwartz D.C."/>
            <person name="Cheng Z."/>
            <person name="Lindblad-Toh K."/>
            <person name="Eichler E.E."/>
            <person name="Ponting C.P."/>
        </authorList>
    </citation>
    <scope>NUCLEOTIDE SEQUENCE [LARGE SCALE GENOMIC DNA]</scope>
    <source>
        <strain>C57BL/6J</strain>
    </source>
</reference>
<reference key="3">
    <citation type="journal article" date="2004" name="Genome Res.">
        <title>The status, quality, and expansion of the NIH full-length cDNA project: the Mammalian Gene Collection (MGC).</title>
        <authorList>
            <consortium name="The MGC Project Team"/>
        </authorList>
    </citation>
    <scope>NUCLEOTIDE SEQUENCE [LARGE SCALE MRNA] (ISOFORM 2)</scope>
    <source>
        <strain>FVB/N</strain>
        <tissue>Mammary tumor</tissue>
    </source>
</reference>
<reference key="4">
    <citation type="journal article" date="2007" name="Proc. Natl. Acad. Sci. U.S.A.">
        <title>Large-scale phosphorylation analysis of mouse liver.</title>
        <authorList>
            <person name="Villen J."/>
            <person name="Beausoleil S.A."/>
            <person name="Gerber S.A."/>
            <person name="Gygi S.P."/>
        </authorList>
    </citation>
    <scope>PHOSPHORYLATION [LARGE SCALE ANALYSIS] AT SER-425 AND SER-431</scope>
    <scope>IDENTIFICATION BY MASS SPECTROMETRY [LARGE SCALE ANALYSIS]</scope>
    <source>
        <tissue>Liver</tissue>
    </source>
</reference>
<reference key="5">
    <citation type="journal article" date="2010" name="Cell">
        <title>A tissue-specific atlas of mouse protein phosphorylation and expression.</title>
        <authorList>
            <person name="Huttlin E.L."/>
            <person name="Jedrychowski M.P."/>
            <person name="Elias J.E."/>
            <person name="Goswami T."/>
            <person name="Rad R."/>
            <person name="Beausoleil S.A."/>
            <person name="Villen J."/>
            <person name="Haas W."/>
            <person name="Sowa M.E."/>
            <person name="Gygi S.P."/>
        </authorList>
    </citation>
    <scope>PHOSPHORYLATION [LARGE SCALE ANALYSIS] AT SER-420; SER-425 AND SER-431</scope>
    <scope>IDENTIFICATION BY MASS SPECTROMETRY [LARGE SCALE ANALYSIS]</scope>
    <source>
        <tissue>Brain</tissue>
        <tissue>Heart</tissue>
        <tissue>Kidney</tissue>
        <tissue>Liver</tissue>
        <tissue>Lung</tissue>
        <tissue>Pancreas</tissue>
        <tissue>Spleen</tissue>
        <tissue>Testis</tissue>
    </source>
</reference>
<evidence type="ECO:0000250" key="1"/>
<evidence type="ECO:0000250" key="2">
    <source>
        <dbReference type="UniProtKB" id="O95232"/>
    </source>
</evidence>
<evidence type="ECO:0000255" key="3"/>
<evidence type="ECO:0000256" key="4">
    <source>
        <dbReference type="SAM" id="MobiDB-lite"/>
    </source>
</evidence>
<evidence type="ECO:0000303" key="5">
    <source>
    </source>
</evidence>
<evidence type="ECO:0000303" key="6">
    <source>
    </source>
</evidence>
<evidence type="ECO:0000305" key="7"/>
<evidence type="ECO:0007744" key="8">
    <source>
    </source>
</evidence>
<evidence type="ECO:0007744" key="9">
    <source>
    </source>
</evidence>
<keyword id="KW-0007">Acetylation</keyword>
<keyword id="KW-0025">Alternative splicing</keyword>
<keyword id="KW-0175">Coiled coil</keyword>
<keyword id="KW-0238">DNA-binding</keyword>
<keyword id="KW-1017">Isopeptide bond</keyword>
<keyword id="KW-0507">mRNA processing</keyword>
<keyword id="KW-0508">mRNA splicing</keyword>
<keyword id="KW-0539">Nucleus</keyword>
<keyword id="KW-0597">Phosphoprotein</keyword>
<keyword id="KW-1185">Reference proteome</keyword>
<keyword id="KW-0832">Ubl conjugation</keyword>
<protein>
    <recommendedName>
        <fullName>Luc7-like protein 3</fullName>
    </recommendedName>
    <alternativeName>
        <fullName>Cisplatin resistance-associated-overexpressed protein</fullName>
    </alternativeName>
</protein>
<comment type="function">
    <text evidence="1">Binds cAMP regulatory element DNA sequence. May play a role in RNA splicing (By similarity).</text>
</comment>
<comment type="subunit">
    <text evidence="2">May interact with SFRS1 and form homodimers. Interacts with JMJD6. Interacts with RBM25. Interacts with RSRC1 (via Arg/Ser-rich domain). Interacts with RRP1B.</text>
</comment>
<comment type="subcellular location">
    <subcellularLocation>
        <location evidence="1">Nucleus speckle</location>
    </subcellularLocation>
</comment>
<comment type="alternative products">
    <event type="alternative splicing"/>
    <isoform>
        <id>Q5SUF2-1</id>
        <name>1</name>
        <sequence type="displayed"/>
    </isoform>
    <isoform>
        <id>Q5SUF2-2</id>
        <name>2</name>
        <sequence type="described" ref="VSP_018138"/>
    </isoform>
    <isoform>
        <id>Q5SUF2-3</id>
        <name>3</name>
        <sequence type="described" ref="VSP_018139"/>
    </isoform>
</comment>
<comment type="similarity">
    <text evidence="7">Belongs to the Luc7 family.</text>
</comment>
<organism>
    <name type="scientific">Mus musculus</name>
    <name type="common">Mouse</name>
    <dbReference type="NCBI Taxonomy" id="10090"/>
    <lineage>
        <taxon>Eukaryota</taxon>
        <taxon>Metazoa</taxon>
        <taxon>Chordata</taxon>
        <taxon>Craniata</taxon>
        <taxon>Vertebrata</taxon>
        <taxon>Euteleostomi</taxon>
        <taxon>Mammalia</taxon>
        <taxon>Eutheria</taxon>
        <taxon>Euarchontoglires</taxon>
        <taxon>Glires</taxon>
        <taxon>Rodentia</taxon>
        <taxon>Myomorpha</taxon>
        <taxon>Muroidea</taxon>
        <taxon>Muridae</taxon>
        <taxon>Murinae</taxon>
        <taxon>Mus</taxon>
        <taxon>Mus</taxon>
    </lineage>
</organism>
<feature type="chain" id="PRO_0000233411" description="Luc7-like protein 3">
    <location>
        <begin position="1"/>
        <end position="432"/>
    </location>
</feature>
<feature type="region of interest" description="Disordered" evidence="4">
    <location>
        <begin position="234"/>
        <end position="432"/>
    </location>
</feature>
<feature type="coiled-coil region" evidence="3">
    <location>
        <begin position="124"/>
        <end position="181"/>
    </location>
</feature>
<feature type="compositionally biased region" description="Basic and acidic residues" evidence="4">
    <location>
        <begin position="234"/>
        <end position="287"/>
    </location>
</feature>
<feature type="compositionally biased region" description="Basic residues" evidence="4">
    <location>
        <begin position="288"/>
        <end position="301"/>
    </location>
</feature>
<feature type="compositionally biased region" description="Basic and acidic residues" evidence="4">
    <location>
        <begin position="302"/>
        <end position="311"/>
    </location>
</feature>
<feature type="compositionally biased region" description="Basic residues" evidence="4">
    <location>
        <begin position="312"/>
        <end position="367"/>
    </location>
</feature>
<feature type="compositionally biased region" description="Basic and acidic residues" evidence="4">
    <location>
        <begin position="368"/>
        <end position="414"/>
    </location>
</feature>
<feature type="compositionally biased region" description="Basic and acidic residues" evidence="4">
    <location>
        <begin position="421"/>
        <end position="432"/>
    </location>
</feature>
<feature type="modified residue" description="N-acetylmethionine" evidence="2">
    <location>
        <position position="1"/>
    </location>
</feature>
<feature type="modified residue" description="Phosphoserine" evidence="2">
    <location>
        <position position="3"/>
    </location>
</feature>
<feature type="modified residue" description="Phosphoserine" evidence="2">
    <location>
        <position position="110"/>
    </location>
</feature>
<feature type="modified residue" description="Phosphoserine" evidence="2">
    <location>
        <position position="115"/>
    </location>
</feature>
<feature type="modified residue" description="N6-acetyllysine" evidence="2">
    <location>
        <position position="231"/>
    </location>
</feature>
<feature type="modified residue" description="Phosphoserine" evidence="9">
    <location>
        <position position="420"/>
    </location>
</feature>
<feature type="modified residue" description="Phosphoserine" evidence="8 9">
    <location>
        <position position="425"/>
    </location>
</feature>
<feature type="modified residue" description="Phosphoserine" evidence="8 9">
    <location>
        <position position="431"/>
    </location>
</feature>
<feature type="cross-link" description="Glycyl lysine isopeptide (Lys-Gly) (interchain with G-Cter in SUMO1); alternate" evidence="2">
    <location>
        <position position="424"/>
    </location>
</feature>
<feature type="cross-link" description="Glycyl lysine isopeptide (Lys-Gly) (interchain with G-Cter in SUMO2); alternate" evidence="2">
    <location>
        <position position="424"/>
    </location>
</feature>
<feature type="splice variant" id="VSP_018138" description="In isoform 2." evidence="5">
    <original>GDTQSN</original>
    <variation>VQRKYAQMKMELSRVRRHTKASSEGKDSVVLQNILRYIVLSQLFCSRLRAPISVPLWKLLSTYVI</variation>
    <location>
        <begin position="427"/>
        <end position="432"/>
    </location>
</feature>
<feature type="splice variant" id="VSP_018139" description="In isoform 3." evidence="6">
    <original>GDTQSN</original>
    <variation>VQRKYAQMKMELSRVRRHTKASSEGKDSVVLQNILRTTVEEFLKNTENGIK</variation>
    <location>
        <begin position="427"/>
        <end position="432"/>
    </location>
</feature>
<feature type="sequence conflict" description="In Ref. 1; BAC39261." evidence="7" ref="1">
    <original>D</original>
    <variation>E</variation>
    <location>
        <position position="402"/>
    </location>
</feature>
<name>LC7L3_MOUSE</name>
<sequence length="432" mass="51450">MISAAQLLDELMGRDRNLAPDEKRSNVRWDHESVCKYYLCGFCPAELFTNTRSDLGPCEKIHDENLRKQYEKSSRFMKVGYERDFLRYLQSLLAEVERRIRRGHARLALSQNQQSSGAAGPTGKNEEKIQVLTDKIDVLLQQIEELGSEGKVEEAQGMMKLVEQLKEERELLRSTTSTIESFAAQEKQMEVCEVCGAFLIVGDAQSRVDDHLMGKQHMGYAKIKATVEELKEKLRKRTEEPDRDERLKKEKQEREEREKEREREREERERKRRREEEEREKERARDRERRKRSRSRSRHSSRTSDRRCSRSRDHKRSRSRDRRRSRSRDRRRSRSHDRSERKHRSRSRDRRRSKSRDRKSYKHRSKSRDREQDRKSKEKEKKGSDDKKSSVKSSSREKQSEDTNPESKESDTKNEVNGTSEDIKSEGDTQSN</sequence>
<accession>Q5SUF2</accession>
<accession>Q3U9D5</accession>
<accession>Q8BUJ5</accession>
<accession>Q921Z3</accession>
<accession>Q9CRS7</accession>
<accession>Q9CTY4</accession>
<proteinExistence type="evidence at protein level"/>
<gene>
    <name type="primary">Luc7l3</name>
    <name type="synonym">Crop</name>
</gene>
<dbReference type="EMBL" id="AK014362">
    <property type="protein sequence ID" value="BAB29297.1"/>
    <property type="molecule type" value="mRNA"/>
</dbReference>
<dbReference type="EMBL" id="AK019464">
    <property type="protein sequence ID" value="BAB31736.1"/>
    <property type="molecule type" value="mRNA"/>
</dbReference>
<dbReference type="EMBL" id="AK084714">
    <property type="protein sequence ID" value="BAC39261.1"/>
    <property type="molecule type" value="mRNA"/>
</dbReference>
<dbReference type="EMBL" id="AK151228">
    <property type="protein sequence ID" value="BAE30220.1"/>
    <property type="molecule type" value="mRNA"/>
</dbReference>
<dbReference type="EMBL" id="AK151839">
    <property type="protein sequence ID" value="BAE30732.1"/>
    <property type="molecule type" value="mRNA"/>
</dbReference>
<dbReference type="EMBL" id="AL645846">
    <property type="status" value="NOT_ANNOTATED_CDS"/>
    <property type="molecule type" value="Genomic_DNA"/>
</dbReference>
<dbReference type="EMBL" id="AL645965">
    <property type="status" value="NOT_ANNOTATED_CDS"/>
    <property type="molecule type" value="Genomic_DNA"/>
</dbReference>
<dbReference type="EMBL" id="BC009092">
    <property type="protein sequence ID" value="AAH09092.1"/>
    <property type="molecule type" value="mRNA"/>
</dbReference>
<dbReference type="CCDS" id="CCDS25252.1">
    <molecule id="Q5SUF2-2"/>
</dbReference>
<dbReference type="CCDS" id="CCDS88223.1">
    <molecule id="Q5SUF2-1"/>
</dbReference>
<dbReference type="CCDS" id="CCDS88224.1">
    <molecule id="Q5SUF2-3"/>
</dbReference>
<dbReference type="RefSeq" id="NP_001348502.1">
    <molecule id="Q5SUF2-3"/>
    <property type="nucleotide sequence ID" value="NM_001361573.1"/>
</dbReference>
<dbReference type="RefSeq" id="NP_001348503.1">
    <molecule id="Q5SUF2-1"/>
    <property type="nucleotide sequence ID" value="NM_001361574.1"/>
</dbReference>
<dbReference type="RefSeq" id="NP_001348504.1">
    <molecule id="Q5SUF2-1"/>
    <property type="nucleotide sequence ID" value="NM_001361575.1"/>
</dbReference>
<dbReference type="RefSeq" id="NP_080589.1">
    <molecule id="Q5SUF2-2"/>
    <property type="nucleotide sequence ID" value="NM_026313.2"/>
</dbReference>
<dbReference type="RefSeq" id="XP_006534073.1">
    <property type="nucleotide sequence ID" value="XM_006534010.3"/>
</dbReference>
<dbReference type="RefSeq" id="XP_006534074.1">
    <property type="nucleotide sequence ID" value="XM_006534011.3"/>
</dbReference>
<dbReference type="SMR" id="Q5SUF2"/>
<dbReference type="BioGRID" id="212365">
    <property type="interactions" value="4"/>
</dbReference>
<dbReference type="FunCoup" id="Q5SUF2">
    <property type="interactions" value="4675"/>
</dbReference>
<dbReference type="IntAct" id="Q5SUF2">
    <property type="interactions" value="2"/>
</dbReference>
<dbReference type="STRING" id="10090.ENSMUSP00000021226"/>
<dbReference type="GlyGen" id="Q5SUF2">
    <property type="glycosylation" value="1 site, 1 O-linked glycan (1 site)"/>
</dbReference>
<dbReference type="iPTMnet" id="Q5SUF2"/>
<dbReference type="PhosphoSitePlus" id="Q5SUF2"/>
<dbReference type="SwissPalm" id="Q5SUF2"/>
<dbReference type="PaxDb" id="10090-ENSMUSP00000021226"/>
<dbReference type="PeptideAtlas" id="Q5SUF2"/>
<dbReference type="ProteomicsDB" id="252459">
    <molecule id="Q5SUF2-1"/>
</dbReference>
<dbReference type="ProteomicsDB" id="252460">
    <molecule id="Q5SUF2-2"/>
</dbReference>
<dbReference type="ProteomicsDB" id="252461">
    <molecule id="Q5SUF2-3"/>
</dbReference>
<dbReference type="Pumba" id="Q5SUF2"/>
<dbReference type="Antibodypedia" id="18160">
    <property type="antibodies" value="97 antibodies from 24 providers"/>
</dbReference>
<dbReference type="DNASU" id="67684"/>
<dbReference type="Ensembl" id="ENSMUST00000021226.14">
    <molecule id="Q5SUF2-2"/>
    <property type="protein sequence ID" value="ENSMUSP00000021226.8"/>
    <property type="gene ID" value="ENSMUSG00000020863.16"/>
</dbReference>
<dbReference type="Ensembl" id="ENSMUST00000107820.2">
    <molecule id="Q5SUF2-1"/>
    <property type="protein sequence ID" value="ENSMUSP00000103450.2"/>
    <property type="gene ID" value="ENSMUSG00000020863.16"/>
</dbReference>
<dbReference type="Ensembl" id="ENSMUST00000107821.9">
    <molecule id="Q5SUF2-1"/>
    <property type="protein sequence ID" value="ENSMUSP00000103451.3"/>
    <property type="gene ID" value="ENSMUSG00000020863.16"/>
</dbReference>
<dbReference type="Ensembl" id="ENSMUST00000166312.8">
    <molecule id="Q5SUF2-3"/>
    <property type="protein sequence ID" value="ENSMUSP00000129919.2"/>
    <property type="gene ID" value="ENSMUSG00000020863.16"/>
</dbReference>
<dbReference type="GeneID" id="67684"/>
<dbReference type="KEGG" id="mmu:67684"/>
<dbReference type="UCSC" id="uc007kyh.1">
    <molecule id="Q5SUF2-2"/>
    <property type="organism name" value="mouse"/>
</dbReference>
<dbReference type="UCSC" id="uc007kyi.1">
    <molecule id="Q5SUF2-1"/>
    <property type="organism name" value="mouse"/>
</dbReference>
<dbReference type="UCSC" id="uc007kyj.1">
    <molecule id="Q5SUF2-3"/>
    <property type="organism name" value="mouse"/>
</dbReference>
<dbReference type="AGR" id="MGI:1914934"/>
<dbReference type="CTD" id="51747"/>
<dbReference type="MGI" id="MGI:1914934">
    <property type="gene designation" value="Luc7l3"/>
</dbReference>
<dbReference type="VEuPathDB" id="HostDB:ENSMUSG00000020863"/>
<dbReference type="eggNOG" id="KOG0796">
    <property type="taxonomic scope" value="Eukaryota"/>
</dbReference>
<dbReference type="GeneTree" id="ENSGT00950000183213"/>
<dbReference type="HOGENOM" id="CLU_030397_0_1_1"/>
<dbReference type="InParanoid" id="Q5SUF2"/>
<dbReference type="OMA" id="PCTRIHD"/>
<dbReference type="OrthoDB" id="88621at9989"/>
<dbReference type="PhylomeDB" id="Q5SUF2"/>
<dbReference type="TreeFam" id="TF354312"/>
<dbReference type="Reactome" id="R-MMU-72163">
    <property type="pathway name" value="mRNA Splicing - Major Pathway"/>
</dbReference>
<dbReference type="BioGRID-ORCS" id="67684">
    <property type="hits" value="24 hits in 63 CRISPR screens"/>
</dbReference>
<dbReference type="ChiTaRS" id="Luc7l3">
    <property type="organism name" value="mouse"/>
</dbReference>
<dbReference type="PRO" id="PR:Q5SUF2"/>
<dbReference type="Proteomes" id="UP000000589">
    <property type="component" value="Chromosome 11"/>
</dbReference>
<dbReference type="RNAct" id="Q5SUF2">
    <property type="molecule type" value="protein"/>
</dbReference>
<dbReference type="Bgee" id="ENSMUSG00000020863">
    <property type="expression patterns" value="Expressed in metanephric cortical collecting duct and 263 other cell types or tissues"/>
</dbReference>
<dbReference type="ExpressionAtlas" id="Q5SUF2">
    <property type="expression patterns" value="baseline and differential"/>
</dbReference>
<dbReference type="GO" id="GO:0016607">
    <property type="term" value="C:nuclear speck"/>
    <property type="evidence" value="ECO:0007669"/>
    <property type="project" value="UniProtKB-SubCell"/>
</dbReference>
<dbReference type="GO" id="GO:0005634">
    <property type="term" value="C:nucleus"/>
    <property type="evidence" value="ECO:0000250"/>
    <property type="project" value="UniProtKB"/>
</dbReference>
<dbReference type="GO" id="GO:0005685">
    <property type="term" value="C:U1 snRNP"/>
    <property type="evidence" value="ECO:0007669"/>
    <property type="project" value="InterPro"/>
</dbReference>
<dbReference type="GO" id="GO:0003677">
    <property type="term" value="F:DNA binding"/>
    <property type="evidence" value="ECO:0007669"/>
    <property type="project" value="UniProtKB-KW"/>
</dbReference>
<dbReference type="GO" id="GO:0003729">
    <property type="term" value="F:mRNA binding"/>
    <property type="evidence" value="ECO:0000250"/>
    <property type="project" value="UniProtKB"/>
</dbReference>
<dbReference type="GO" id="GO:0006376">
    <property type="term" value="P:mRNA splice site recognition"/>
    <property type="evidence" value="ECO:0007669"/>
    <property type="project" value="InterPro"/>
</dbReference>
<dbReference type="GO" id="GO:0008380">
    <property type="term" value="P:RNA splicing"/>
    <property type="evidence" value="ECO:0000250"/>
    <property type="project" value="UniProtKB"/>
</dbReference>
<dbReference type="InterPro" id="IPR004882">
    <property type="entry name" value="Luc7-rel"/>
</dbReference>
<dbReference type="PANTHER" id="PTHR12375">
    <property type="entry name" value="RNA-BINDING PROTEIN LUC7-RELATED"/>
    <property type="match status" value="1"/>
</dbReference>
<dbReference type="Pfam" id="PF03194">
    <property type="entry name" value="LUC7"/>
    <property type="match status" value="1"/>
</dbReference>